<keyword id="KW-0067">ATP-binding</keyword>
<keyword id="KW-0436">Ligase</keyword>
<keyword id="KW-0547">Nucleotide-binding</keyword>
<accession>Q0I4V7</accession>
<gene>
    <name evidence="1" type="primary">epmA</name>
    <name type="synonym">yjeA</name>
    <name type="ordered locus">HS_1276</name>
</gene>
<organism>
    <name type="scientific">Histophilus somni (strain 129Pt)</name>
    <name type="common">Haemophilus somnus</name>
    <dbReference type="NCBI Taxonomy" id="205914"/>
    <lineage>
        <taxon>Bacteria</taxon>
        <taxon>Pseudomonadati</taxon>
        <taxon>Pseudomonadota</taxon>
        <taxon>Gammaproteobacteria</taxon>
        <taxon>Pasteurellales</taxon>
        <taxon>Pasteurellaceae</taxon>
        <taxon>Histophilus</taxon>
    </lineage>
</organism>
<reference key="1">
    <citation type="journal article" date="2007" name="J. Bacteriol.">
        <title>Complete genome sequence of Haemophilus somnus (Histophilus somni) strain 129Pt and comparison to Haemophilus ducreyi 35000HP and Haemophilus influenzae Rd.</title>
        <authorList>
            <person name="Challacombe J.F."/>
            <person name="Duncan A.J."/>
            <person name="Brettin T.S."/>
            <person name="Bruce D."/>
            <person name="Chertkov O."/>
            <person name="Detter J.C."/>
            <person name="Han C.S."/>
            <person name="Misra M."/>
            <person name="Richardson P."/>
            <person name="Tapia R."/>
            <person name="Thayer N."/>
            <person name="Xie G."/>
            <person name="Inzana T.J."/>
        </authorList>
    </citation>
    <scope>NUCLEOTIDE SEQUENCE [LARGE SCALE GENOMIC DNA]</scope>
    <source>
        <strain>129Pt</strain>
    </source>
</reference>
<dbReference type="EC" id="6.3.2.-" evidence="1"/>
<dbReference type="EMBL" id="CP000436">
    <property type="protein sequence ID" value="ABI25551.1"/>
    <property type="molecule type" value="Genomic_DNA"/>
</dbReference>
<dbReference type="SMR" id="Q0I4V7"/>
<dbReference type="KEGG" id="hso:HS_1276"/>
<dbReference type="eggNOG" id="COG2269">
    <property type="taxonomic scope" value="Bacteria"/>
</dbReference>
<dbReference type="HOGENOM" id="CLU_008255_1_1_6"/>
<dbReference type="GO" id="GO:0005829">
    <property type="term" value="C:cytosol"/>
    <property type="evidence" value="ECO:0007669"/>
    <property type="project" value="TreeGrafter"/>
</dbReference>
<dbReference type="GO" id="GO:0016880">
    <property type="term" value="F:acid-ammonia (or amide) ligase activity"/>
    <property type="evidence" value="ECO:0007669"/>
    <property type="project" value="UniProtKB-UniRule"/>
</dbReference>
<dbReference type="GO" id="GO:0005524">
    <property type="term" value="F:ATP binding"/>
    <property type="evidence" value="ECO:0007669"/>
    <property type="project" value="UniProtKB-UniRule"/>
</dbReference>
<dbReference type="GO" id="GO:0004824">
    <property type="term" value="F:lysine-tRNA ligase activity"/>
    <property type="evidence" value="ECO:0007669"/>
    <property type="project" value="InterPro"/>
</dbReference>
<dbReference type="GO" id="GO:0000049">
    <property type="term" value="F:tRNA binding"/>
    <property type="evidence" value="ECO:0007669"/>
    <property type="project" value="TreeGrafter"/>
</dbReference>
<dbReference type="GO" id="GO:0006430">
    <property type="term" value="P:lysyl-tRNA aminoacylation"/>
    <property type="evidence" value="ECO:0007669"/>
    <property type="project" value="InterPro"/>
</dbReference>
<dbReference type="FunFam" id="3.30.930.10:FF:000017">
    <property type="entry name" value="Elongation factor P--(R)-beta-lysine ligase"/>
    <property type="match status" value="1"/>
</dbReference>
<dbReference type="Gene3D" id="3.30.930.10">
    <property type="entry name" value="Bira Bifunctional Protein, Domain 2"/>
    <property type="match status" value="1"/>
</dbReference>
<dbReference type="HAMAP" id="MF_00174">
    <property type="entry name" value="EF_P_modif_A"/>
    <property type="match status" value="1"/>
</dbReference>
<dbReference type="InterPro" id="IPR004364">
    <property type="entry name" value="Aa-tRNA-synt_II"/>
</dbReference>
<dbReference type="InterPro" id="IPR006195">
    <property type="entry name" value="aa-tRNA-synth_II"/>
</dbReference>
<dbReference type="InterPro" id="IPR045864">
    <property type="entry name" value="aa-tRNA-synth_II/BPL/LPL"/>
</dbReference>
<dbReference type="InterPro" id="IPR004525">
    <property type="entry name" value="EpmA"/>
</dbReference>
<dbReference type="InterPro" id="IPR018149">
    <property type="entry name" value="Lys-tRNA-synth_II_C"/>
</dbReference>
<dbReference type="NCBIfam" id="TIGR00462">
    <property type="entry name" value="genX"/>
    <property type="match status" value="1"/>
</dbReference>
<dbReference type="NCBIfam" id="NF006828">
    <property type="entry name" value="PRK09350.1"/>
    <property type="match status" value="1"/>
</dbReference>
<dbReference type="PANTHER" id="PTHR42918:SF6">
    <property type="entry name" value="ELONGATION FACTOR P--(R)-BETA-LYSINE LIGASE"/>
    <property type="match status" value="1"/>
</dbReference>
<dbReference type="PANTHER" id="PTHR42918">
    <property type="entry name" value="LYSYL-TRNA SYNTHETASE"/>
    <property type="match status" value="1"/>
</dbReference>
<dbReference type="Pfam" id="PF00152">
    <property type="entry name" value="tRNA-synt_2"/>
    <property type="match status" value="1"/>
</dbReference>
<dbReference type="PRINTS" id="PR00982">
    <property type="entry name" value="TRNASYNTHLYS"/>
</dbReference>
<dbReference type="SUPFAM" id="SSF55681">
    <property type="entry name" value="Class II aaRS and biotin synthetases"/>
    <property type="match status" value="1"/>
</dbReference>
<dbReference type="PROSITE" id="PS50862">
    <property type="entry name" value="AA_TRNA_LIGASE_II"/>
    <property type="match status" value="1"/>
</dbReference>
<sequence length="323" mass="36724">MSLNEQWQPSASIQNLLARAKIIADIRRFFTERGLLEVETPVLSEFGVTDVHLSTFSTAFTSPFMEKSKTLWLTTSPEYHMKRLLAAGSGAIFQLCKVFRNEESGKKHNPEFTMLEWYRPHFDMHRLINEVDDLLQQTLDCEPAEMASYQFVFQEHVGIDPLSAPINELIEKARECHLDGAENEDRDTLLQFLFSTLVEPNIGQNKPIAVYHFPATQAALAQISSEDHRVAERFEFYYKGIELANGFNELTDAQEQEHRFNQDNRLREQLGLPQHEIDHRFLGALQAGLPNTAGVALGVDRLIMLALGAENISEVISFNIDCA</sequence>
<feature type="chain" id="PRO_1000023625" description="Elongation factor P--(R)-beta-lysine ligase">
    <location>
        <begin position="1"/>
        <end position="323"/>
    </location>
</feature>
<feature type="binding site" evidence="1">
    <location>
        <begin position="76"/>
        <end position="78"/>
    </location>
    <ligand>
        <name>substrate</name>
    </ligand>
</feature>
<feature type="binding site" evidence="1">
    <location>
        <begin position="100"/>
        <end position="102"/>
    </location>
    <ligand>
        <name>ATP</name>
        <dbReference type="ChEBI" id="CHEBI:30616"/>
    </ligand>
</feature>
<feature type="binding site" evidence="1">
    <location>
        <position position="109"/>
    </location>
    <ligand>
        <name>ATP</name>
        <dbReference type="ChEBI" id="CHEBI:30616"/>
    </ligand>
</feature>
<feature type="binding site" evidence="1">
    <location>
        <position position="118"/>
    </location>
    <ligand>
        <name>substrate</name>
    </ligand>
</feature>
<feature type="binding site" evidence="1">
    <location>
        <begin position="242"/>
        <end position="243"/>
    </location>
    <ligand>
        <name>ATP</name>
        <dbReference type="ChEBI" id="CHEBI:30616"/>
    </ligand>
</feature>
<feature type="binding site" evidence="1">
    <location>
        <position position="249"/>
    </location>
    <ligand>
        <name>substrate</name>
    </ligand>
</feature>
<feature type="binding site" evidence="1">
    <location>
        <position position="298"/>
    </location>
    <ligand>
        <name>ATP</name>
        <dbReference type="ChEBI" id="CHEBI:30616"/>
    </ligand>
</feature>
<name>EPMA_HISS1</name>
<evidence type="ECO:0000255" key="1">
    <source>
        <dbReference type="HAMAP-Rule" id="MF_00174"/>
    </source>
</evidence>
<proteinExistence type="inferred from homology"/>
<protein>
    <recommendedName>
        <fullName evidence="1">Elongation factor P--(R)-beta-lysine ligase</fullName>
        <shortName evidence="1">EF-P--(R)-beta-lysine ligase</shortName>
        <ecNumber evidence="1">6.3.2.-</ecNumber>
    </recommendedName>
    <alternativeName>
        <fullName evidence="1">EF-P post-translational modification enzyme A</fullName>
    </alternativeName>
    <alternativeName>
        <fullName evidence="1">EF-P-lysine lysyltransferase</fullName>
    </alternativeName>
</protein>
<comment type="function">
    <text evidence="1">With EpmB is involved in the beta-lysylation step of the post-translational modification of translation elongation factor P (EF-P). Catalyzes the ATP-dependent activation of (R)-beta-lysine produced by EpmB, forming a lysyl-adenylate, from which the beta-lysyl moiety is then transferred to the epsilon-amino group of a conserved specific lysine residue in EF-P.</text>
</comment>
<comment type="catalytic activity">
    <reaction evidence="1">
        <text>D-beta-lysine + L-lysyl-[protein] + ATP = N(6)-((3R)-3,6-diaminohexanoyl)-L-lysyl-[protein] + AMP + diphosphate + H(+)</text>
        <dbReference type="Rhea" id="RHEA:83435"/>
        <dbReference type="Rhea" id="RHEA-COMP:9752"/>
        <dbReference type="Rhea" id="RHEA-COMP:20131"/>
        <dbReference type="ChEBI" id="CHEBI:15378"/>
        <dbReference type="ChEBI" id="CHEBI:29969"/>
        <dbReference type="ChEBI" id="CHEBI:30616"/>
        <dbReference type="ChEBI" id="CHEBI:33019"/>
        <dbReference type="ChEBI" id="CHEBI:84138"/>
        <dbReference type="ChEBI" id="CHEBI:156053"/>
        <dbReference type="ChEBI" id="CHEBI:456215"/>
    </reaction>
    <physiologicalReaction direction="left-to-right" evidence="1">
        <dbReference type="Rhea" id="RHEA:83436"/>
    </physiologicalReaction>
</comment>
<comment type="subunit">
    <text evidence="1">Homodimer.</text>
</comment>
<comment type="similarity">
    <text evidence="1">Belongs to the class-II aminoacyl-tRNA synthetase family. EpmA subfamily.</text>
</comment>